<reference key="1">
    <citation type="submission" date="2001-11" db="EMBL/GenBank/DDBJ databases">
        <title>Cloning and expression of the human NOGO-interacting mitochondrial protein.</title>
        <authorList>
            <person name="Jin W.-L."/>
            <person name="Hou B."/>
            <person name="Long M."/>
            <person name="Li R."/>
            <person name="Ju G."/>
        </authorList>
    </citation>
    <scope>NUCLEOTIDE SEQUENCE [MRNA] (ISOFORMS 1 AND 3)</scope>
    <source>
        <tissue>Brain</tissue>
    </source>
</reference>
<reference key="2">
    <citation type="journal article" date="2004" name="Nat. Genet.">
        <title>Complete sequencing and characterization of 21,243 full-length human cDNAs.</title>
        <authorList>
            <person name="Ota T."/>
            <person name="Suzuki Y."/>
            <person name="Nishikawa T."/>
            <person name="Otsuki T."/>
            <person name="Sugiyama T."/>
            <person name="Irie R."/>
            <person name="Wakamatsu A."/>
            <person name="Hayashi K."/>
            <person name="Sato H."/>
            <person name="Nagai K."/>
            <person name="Kimura K."/>
            <person name="Makita H."/>
            <person name="Sekine M."/>
            <person name="Obayashi M."/>
            <person name="Nishi T."/>
            <person name="Shibahara T."/>
            <person name="Tanaka T."/>
            <person name="Ishii S."/>
            <person name="Yamamoto J."/>
            <person name="Saito K."/>
            <person name="Kawai Y."/>
            <person name="Isono Y."/>
            <person name="Nakamura Y."/>
            <person name="Nagahari K."/>
            <person name="Murakami K."/>
            <person name="Yasuda T."/>
            <person name="Iwayanagi T."/>
            <person name="Wagatsuma M."/>
            <person name="Shiratori A."/>
            <person name="Sudo H."/>
            <person name="Hosoiri T."/>
            <person name="Kaku Y."/>
            <person name="Kodaira H."/>
            <person name="Kondo H."/>
            <person name="Sugawara M."/>
            <person name="Takahashi M."/>
            <person name="Kanda K."/>
            <person name="Yokoi T."/>
            <person name="Furuya T."/>
            <person name="Kikkawa E."/>
            <person name="Omura Y."/>
            <person name="Abe K."/>
            <person name="Kamihara K."/>
            <person name="Katsuta N."/>
            <person name="Sato K."/>
            <person name="Tanikawa M."/>
            <person name="Yamazaki M."/>
            <person name="Ninomiya K."/>
            <person name="Ishibashi T."/>
            <person name="Yamashita H."/>
            <person name="Murakawa K."/>
            <person name="Fujimori K."/>
            <person name="Tanai H."/>
            <person name="Kimata M."/>
            <person name="Watanabe M."/>
            <person name="Hiraoka S."/>
            <person name="Chiba Y."/>
            <person name="Ishida S."/>
            <person name="Ono Y."/>
            <person name="Takiguchi S."/>
            <person name="Watanabe S."/>
            <person name="Yosida M."/>
            <person name="Hotuta T."/>
            <person name="Kusano J."/>
            <person name="Kanehori K."/>
            <person name="Takahashi-Fujii A."/>
            <person name="Hara H."/>
            <person name="Tanase T.-O."/>
            <person name="Nomura Y."/>
            <person name="Togiya S."/>
            <person name="Komai F."/>
            <person name="Hara R."/>
            <person name="Takeuchi K."/>
            <person name="Arita M."/>
            <person name="Imose N."/>
            <person name="Musashino K."/>
            <person name="Yuuki H."/>
            <person name="Oshima A."/>
            <person name="Sasaki N."/>
            <person name="Aotsuka S."/>
            <person name="Yoshikawa Y."/>
            <person name="Matsunawa H."/>
            <person name="Ichihara T."/>
            <person name="Shiohata N."/>
            <person name="Sano S."/>
            <person name="Moriya S."/>
            <person name="Momiyama H."/>
            <person name="Satoh N."/>
            <person name="Takami S."/>
            <person name="Terashima Y."/>
            <person name="Suzuki O."/>
            <person name="Nakagawa S."/>
            <person name="Senoh A."/>
            <person name="Mizoguchi H."/>
            <person name="Goto Y."/>
            <person name="Shimizu F."/>
            <person name="Wakebe H."/>
            <person name="Hishigaki H."/>
            <person name="Watanabe T."/>
            <person name="Sugiyama A."/>
            <person name="Takemoto M."/>
            <person name="Kawakami B."/>
            <person name="Yamazaki M."/>
            <person name="Watanabe K."/>
            <person name="Kumagai A."/>
            <person name="Itakura S."/>
            <person name="Fukuzumi Y."/>
            <person name="Fujimori Y."/>
            <person name="Komiyama M."/>
            <person name="Tashiro H."/>
            <person name="Tanigami A."/>
            <person name="Fujiwara T."/>
            <person name="Ono T."/>
            <person name="Yamada K."/>
            <person name="Fujii Y."/>
            <person name="Ozaki K."/>
            <person name="Hirao M."/>
            <person name="Ohmori Y."/>
            <person name="Kawabata A."/>
            <person name="Hikiji T."/>
            <person name="Kobatake N."/>
            <person name="Inagaki H."/>
            <person name="Ikema Y."/>
            <person name="Okamoto S."/>
            <person name="Okitani R."/>
            <person name="Kawakami T."/>
            <person name="Noguchi S."/>
            <person name="Itoh T."/>
            <person name="Shigeta K."/>
            <person name="Senba T."/>
            <person name="Matsumura K."/>
            <person name="Nakajima Y."/>
            <person name="Mizuno T."/>
            <person name="Morinaga M."/>
            <person name="Sasaki M."/>
            <person name="Togashi T."/>
            <person name="Oyama M."/>
            <person name="Hata H."/>
            <person name="Watanabe M."/>
            <person name="Komatsu T."/>
            <person name="Mizushima-Sugano J."/>
            <person name="Satoh T."/>
            <person name="Shirai Y."/>
            <person name="Takahashi Y."/>
            <person name="Nakagawa K."/>
            <person name="Okumura K."/>
            <person name="Nagase T."/>
            <person name="Nomura N."/>
            <person name="Kikuchi H."/>
            <person name="Masuho Y."/>
            <person name="Yamashita R."/>
            <person name="Nakai K."/>
            <person name="Yada T."/>
            <person name="Nakamura Y."/>
            <person name="Ohara O."/>
            <person name="Isogai T."/>
            <person name="Sugano S."/>
        </authorList>
    </citation>
    <scope>NUCLEOTIDE SEQUENCE [LARGE SCALE MRNA] (ISOFORM 2)</scope>
    <source>
        <tissue>Thalamus</tissue>
    </source>
</reference>
<reference key="3">
    <citation type="journal article" date="2003" name="Nature">
        <title>The DNA sequence and analysis of human chromosome 6.</title>
        <authorList>
            <person name="Mungall A.J."/>
            <person name="Palmer S.A."/>
            <person name="Sims S.K."/>
            <person name="Edwards C.A."/>
            <person name="Ashurst J.L."/>
            <person name="Wilming L."/>
            <person name="Jones M.C."/>
            <person name="Horton R."/>
            <person name="Hunt S.E."/>
            <person name="Scott C.E."/>
            <person name="Gilbert J.G.R."/>
            <person name="Clamp M.E."/>
            <person name="Bethel G."/>
            <person name="Milne S."/>
            <person name="Ainscough R."/>
            <person name="Almeida J.P."/>
            <person name="Ambrose K.D."/>
            <person name="Andrews T.D."/>
            <person name="Ashwell R.I.S."/>
            <person name="Babbage A.K."/>
            <person name="Bagguley C.L."/>
            <person name="Bailey J."/>
            <person name="Banerjee R."/>
            <person name="Barker D.J."/>
            <person name="Barlow K.F."/>
            <person name="Bates K."/>
            <person name="Beare D.M."/>
            <person name="Beasley H."/>
            <person name="Beasley O."/>
            <person name="Bird C.P."/>
            <person name="Blakey S.E."/>
            <person name="Bray-Allen S."/>
            <person name="Brook J."/>
            <person name="Brown A.J."/>
            <person name="Brown J.Y."/>
            <person name="Burford D.C."/>
            <person name="Burrill W."/>
            <person name="Burton J."/>
            <person name="Carder C."/>
            <person name="Carter N.P."/>
            <person name="Chapman J.C."/>
            <person name="Clark S.Y."/>
            <person name="Clark G."/>
            <person name="Clee C.M."/>
            <person name="Clegg S."/>
            <person name="Cobley V."/>
            <person name="Collier R.E."/>
            <person name="Collins J.E."/>
            <person name="Colman L.K."/>
            <person name="Corby N.R."/>
            <person name="Coville G.J."/>
            <person name="Culley K.M."/>
            <person name="Dhami P."/>
            <person name="Davies J."/>
            <person name="Dunn M."/>
            <person name="Earthrowl M.E."/>
            <person name="Ellington A.E."/>
            <person name="Evans K.A."/>
            <person name="Faulkner L."/>
            <person name="Francis M.D."/>
            <person name="Frankish A."/>
            <person name="Frankland J."/>
            <person name="French L."/>
            <person name="Garner P."/>
            <person name="Garnett J."/>
            <person name="Ghori M.J."/>
            <person name="Gilby L.M."/>
            <person name="Gillson C.J."/>
            <person name="Glithero R.J."/>
            <person name="Grafham D.V."/>
            <person name="Grant M."/>
            <person name="Gribble S."/>
            <person name="Griffiths C."/>
            <person name="Griffiths M.N.D."/>
            <person name="Hall R."/>
            <person name="Halls K.S."/>
            <person name="Hammond S."/>
            <person name="Harley J.L."/>
            <person name="Hart E.A."/>
            <person name="Heath P.D."/>
            <person name="Heathcott R."/>
            <person name="Holmes S.J."/>
            <person name="Howden P.J."/>
            <person name="Howe K.L."/>
            <person name="Howell G.R."/>
            <person name="Huckle E."/>
            <person name="Humphray S.J."/>
            <person name="Humphries M.D."/>
            <person name="Hunt A.R."/>
            <person name="Johnson C.M."/>
            <person name="Joy A.A."/>
            <person name="Kay M."/>
            <person name="Keenan S.J."/>
            <person name="Kimberley A.M."/>
            <person name="King A."/>
            <person name="Laird G.K."/>
            <person name="Langford C."/>
            <person name="Lawlor S."/>
            <person name="Leongamornlert D.A."/>
            <person name="Leversha M."/>
            <person name="Lloyd C.R."/>
            <person name="Lloyd D.M."/>
            <person name="Loveland J.E."/>
            <person name="Lovell J."/>
            <person name="Martin S."/>
            <person name="Mashreghi-Mohammadi M."/>
            <person name="Maslen G.L."/>
            <person name="Matthews L."/>
            <person name="McCann O.T."/>
            <person name="McLaren S.J."/>
            <person name="McLay K."/>
            <person name="McMurray A."/>
            <person name="Moore M.J.F."/>
            <person name="Mullikin J.C."/>
            <person name="Niblett D."/>
            <person name="Nickerson T."/>
            <person name="Novik K.L."/>
            <person name="Oliver K."/>
            <person name="Overton-Larty E.K."/>
            <person name="Parker A."/>
            <person name="Patel R."/>
            <person name="Pearce A.V."/>
            <person name="Peck A.I."/>
            <person name="Phillimore B.J.C.T."/>
            <person name="Phillips S."/>
            <person name="Plumb R.W."/>
            <person name="Porter K.M."/>
            <person name="Ramsey Y."/>
            <person name="Ranby S.A."/>
            <person name="Rice C.M."/>
            <person name="Ross M.T."/>
            <person name="Searle S.M."/>
            <person name="Sehra H.K."/>
            <person name="Sheridan E."/>
            <person name="Skuce C.D."/>
            <person name="Smith S."/>
            <person name="Smith M."/>
            <person name="Spraggon L."/>
            <person name="Squares S.L."/>
            <person name="Steward C.A."/>
            <person name="Sycamore N."/>
            <person name="Tamlyn-Hall G."/>
            <person name="Tester J."/>
            <person name="Theaker A.J."/>
            <person name="Thomas D.W."/>
            <person name="Thorpe A."/>
            <person name="Tracey A."/>
            <person name="Tromans A."/>
            <person name="Tubby B."/>
            <person name="Wall M."/>
            <person name="Wallis J.M."/>
            <person name="West A.P."/>
            <person name="White S.S."/>
            <person name="Whitehead S.L."/>
            <person name="Whittaker H."/>
            <person name="Wild A."/>
            <person name="Willey D.J."/>
            <person name="Wilmer T.E."/>
            <person name="Wood J.M."/>
            <person name="Wray P.W."/>
            <person name="Wyatt J.C."/>
            <person name="Young L."/>
            <person name="Younger R.M."/>
            <person name="Bentley D.R."/>
            <person name="Coulson A."/>
            <person name="Durbin R.M."/>
            <person name="Hubbard T."/>
            <person name="Sulston J.E."/>
            <person name="Dunham I."/>
            <person name="Rogers J."/>
            <person name="Beck S."/>
        </authorList>
    </citation>
    <scope>NUCLEOTIDE SEQUENCE [LARGE SCALE GENOMIC DNA]</scope>
</reference>
<reference key="4">
    <citation type="journal article" date="2004" name="Genome Res.">
        <title>The status, quality, and expansion of the NIH full-length cDNA project: the Mammalian Gene Collection (MGC).</title>
        <authorList>
            <consortium name="The MGC Project Team"/>
        </authorList>
    </citation>
    <scope>NUCLEOTIDE SEQUENCE [LARGE SCALE MRNA] (ISOFORM 1)</scope>
    <source>
        <tissue>B-cell</tissue>
    </source>
</reference>
<reference key="5">
    <citation type="journal article" date="2002" name="J. Neurochem.">
        <title>Identification and characterization of a novel Nogo-interacting mitochondrial protein (NIMP).</title>
        <authorList>
            <person name="Hu W.-H."/>
            <person name="Hausmann O.N."/>
            <person name="Yan M.-S."/>
            <person name="Walters W.M."/>
            <person name="Wong P.K.Y."/>
            <person name="Bethea J.R."/>
        </authorList>
    </citation>
    <scope>TISSUE SPECIFICITY</scope>
    <scope>SUBCELLULAR LOCATION</scope>
</reference>
<reference key="6">
    <citation type="journal article" date="2011" name="BMC Syst. Biol.">
        <title>Initial characterization of the human central proteome.</title>
        <authorList>
            <person name="Burkard T.R."/>
            <person name="Planyavsky M."/>
            <person name="Kaupe I."/>
            <person name="Breitwieser F.P."/>
            <person name="Buerckstuemmer T."/>
            <person name="Bennett K.L."/>
            <person name="Superti-Furga G."/>
            <person name="Colinge J."/>
        </authorList>
    </citation>
    <scope>IDENTIFICATION BY MASS SPECTROMETRY [LARGE SCALE ANALYSIS]</scope>
</reference>
<reference key="7">
    <citation type="journal article" date="2015" name="Proteomics">
        <title>N-terminome analysis of the human mitochondrial proteome.</title>
        <authorList>
            <person name="Vaca Jacome A.S."/>
            <person name="Rabilloud T."/>
            <person name="Schaeffer-Reiss C."/>
            <person name="Rompais M."/>
            <person name="Ayoub D."/>
            <person name="Lane L."/>
            <person name="Bairoch A."/>
            <person name="Van Dorsselaer A."/>
            <person name="Carapito C."/>
        </authorList>
    </citation>
    <scope>CLEAVAGE OF TRANSIT PEPTIDE [LARGE SCALE ANALYSIS] AFTER SER-40</scope>
    <scope>IDENTIFICATION BY MASS SPECTROMETRY [LARGE SCALE ANALYSIS]</scope>
</reference>
<reference key="8">
    <citation type="journal article" date="2024" name="Nat. Chem. Biol.">
        <title>Mitochondrial matrix RTN4IP1/OPA10 is an oxidoreductase for coenzyme Q synthesis.</title>
        <authorList>
            <person name="Park I."/>
            <person name="Kim K.E."/>
            <person name="Kim J."/>
            <person name="Kim A.K."/>
            <person name="Bae S."/>
            <person name="Jung M."/>
            <person name="Choi J."/>
            <person name="Mishra P.K."/>
            <person name="Kim T.M."/>
            <person name="Kwak C."/>
            <person name="Kang M.G."/>
            <person name="Yoo C.M."/>
            <person name="Mun J.Y."/>
            <person name="Liu K.H."/>
            <person name="Lee K.S."/>
            <person name="Kim J.S."/>
            <person name="Suh J.M."/>
            <person name="Rhee H.W."/>
        </authorList>
    </citation>
    <scope>FUNCTION</scope>
    <scope>CATALYTIC ACTIVITY</scope>
    <scope>PATHWAY</scope>
    <scope>SUBCELLULAR LOCATION</scope>
    <scope>MUTAGENESIS OF GLY-215</scope>
    <scope>CHARACTERIZATION OF VARIANT OPA10 HIS-103</scope>
</reference>
<reference evidence="24" key="9">
    <citation type="submission" date="2008-01" db="PDB data bank">
        <title>Crystal Structure of Human Reticulon 4 Interacting Protein 1 in Complex with Nadph.</title>
        <authorList>
            <person name="Pike A.C.W."/>
            <person name="Guo K."/>
            <person name="Elkins J."/>
            <person name="Ugochukwu E."/>
            <person name="Roos A.K."/>
            <person name="Filippakopoulos P."/>
            <person name="von Delft F."/>
            <person name="Edwards A."/>
            <person name="Arrowsmith C.H."/>
            <person name="Weigelt J."/>
            <person name="Bountra C."/>
            <person name="Oppermann U."/>
        </authorList>
    </citation>
    <scope>X-RAY CRYSTALLOGRAPHY (2.10 ANGSTROMS) OF 45-396 IN COMPLEX WITH NADPH</scope>
</reference>
<reference key="10">
    <citation type="journal article" date="2015" name="Am. J. Hum. Genet.">
        <title>Recessive mutations in RTN4IP1 cause isolated and syndromic optic neuropathies.</title>
        <authorList>
            <person name="Angebault C."/>
            <person name="Guichet P.O."/>
            <person name="Talmat-Amar Y."/>
            <person name="Charif M."/>
            <person name="Gerber S."/>
            <person name="Fares-Taie L."/>
            <person name="Gueguen N."/>
            <person name="Halloy F."/>
            <person name="Moore D."/>
            <person name="Amati-Bonneau P."/>
            <person name="Manes G."/>
            <person name="Hebrard M."/>
            <person name="Bocquet B."/>
            <person name="Quiles M."/>
            <person name="Piro-Megy C."/>
            <person name="Teigell M."/>
            <person name="Delettre C."/>
            <person name="Rossel M."/>
            <person name="Meunier I."/>
            <person name="Preising M."/>
            <person name="Lorenz B."/>
            <person name="Carelli V."/>
            <person name="Chinnery P.F."/>
            <person name="Yu-Wai-Man P."/>
            <person name="Kaplan J."/>
            <person name="Roubertie A."/>
            <person name="Barakat A."/>
            <person name="Bonneau D."/>
            <person name="Reynier P."/>
            <person name="Rozet J.M."/>
            <person name="Bomont P."/>
            <person name="Hamel C.P."/>
            <person name="Lenaers G."/>
        </authorList>
    </citation>
    <scope>VARIANTS OPA10 HIS-103 AND 201-LYS--VAL-396 DEL</scope>
    <scope>SUBCELLULAR LOCATION</scope>
</reference>
<reference key="11">
    <citation type="journal article" date="2017" name="J. Hum. Genet.">
        <title>Siblings with optic neuropathy and RTN4IP1 mutation.</title>
        <authorList>
            <person name="Okamoto N."/>
            <person name="Miya F."/>
            <person name="Hatsukawa Y."/>
            <person name="Suzuki Y."/>
            <person name="Kawato K."/>
            <person name="Yamamoto Y."/>
            <person name="Tsunoda T."/>
            <person name="Kato M."/>
            <person name="Saitoh S."/>
            <person name="Yamasaki M."/>
            <person name="Kanemura Y."/>
            <person name="Kosaki K."/>
        </authorList>
    </citation>
    <scope>VARIANT OPA10 HIS-103</scope>
</reference>
<reference key="12">
    <citation type="journal article" date="2018" name="JAMA Neurol.">
        <title>Neurologic Phenotypes Associated With Mutations in RTN4IP1 (OPA10) in Children and Young Adults.</title>
        <authorList>
            <person name="Charif M."/>
            <person name="Nasca A."/>
            <person name="Thompson K."/>
            <person name="Gerber S."/>
            <person name="Makowski C."/>
            <person name="Mazaheri N."/>
            <person name="Bris C."/>
            <person name="Goudenege D."/>
            <person name="Legati A."/>
            <person name="Maroofian R."/>
            <person name="Shariati G."/>
            <person name="Lamantea E."/>
            <person name="Hopton S."/>
            <person name="Ardissone A."/>
            <person name="Moroni I."/>
            <person name="Giannotta M."/>
            <person name="Siegel C."/>
            <person name="Strom T.M."/>
            <person name="Prokisch H."/>
            <person name="Vignal-Clermont C."/>
            <person name="Derrien S."/>
            <person name="Zanlonghi X."/>
            <person name="Kaplan J."/>
            <person name="Hamel C.P."/>
            <person name="Leruez S."/>
            <person name="Procaccio V."/>
            <person name="Bonneau D."/>
            <person name="Reynier P."/>
            <person name="White F.E."/>
            <person name="Hardy S.A."/>
            <person name="Barbosa I.A."/>
            <person name="Simpson M.A."/>
            <person name="Vara R."/>
            <person name="Perdomo Trujillo Y."/>
            <person name="Galehdari H."/>
            <person name="Deshpande C."/>
            <person name="Haack T.B."/>
            <person name="Rozet J.M."/>
            <person name="Taylor R.W."/>
            <person name="Ghezzi D."/>
            <person name="Amati-Bonneau P."/>
            <person name="Lenaers G."/>
        </authorList>
    </citation>
    <scope>VARIANTS OPA10 ILE-43; CYS-51; HIS-103; SER-105; 144-TRP--VAL-396 DEL; PHE-167; GLU-321; PRO-356 AND PHE-362</scope>
</reference>
<reference key="13">
    <citation type="journal article" date="2019" name="J. Mol. Neurosci.">
        <title>Whole Exome Sequencing Identifies Two Novel Mutations in the Reticulon 4-Interacting Protein 1 Gene in a Chinese Family with Autosomal Recessive Optic Neuropathies.</title>
        <authorList>
            <person name="Zou X.H."/>
            <person name="Guo X.X."/>
            <person name="Su H.Z."/>
            <person name="Wang C."/>
            <person name="Dong E.L."/>
            <person name="Wang N."/>
            <person name="Chen W.J."/>
            <person name="Zhang Q.J."/>
        </authorList>
    </citation>
    <scope>VARIANTS OPA10 ARG-216 AND 388-ARG--VAL-396 DEL</scope>
</reference>
<reference key="14">
    <citation type="journal article" date="2020" name="Neuropediatrics">
        <title>Optic Atrophy and Generalized Chorea in a Patient Harboring an OPA10/RTN4IP1 Pathogenic Variant.</title>
        <authorList>
            <person name="Giacomini T."/>
            <person name="Gamucci A."/>
            <person name="Pisciotta L."/>
            <person name="Nesti C."/>
            <person name="Fiorillo C."/>
            <person name="Doccini S."/>
            <person name="Morana G."/>
            <person name="Nobili L."/>
            <person name="Santorelli F.M."/>
            <person name="Mancardi M.M."/>
            <person name="De Grandis E."/>
        </authorList>
    </citation>
    <scope>VARIANT OPA10 HIS-103</scope>
</reference>
<reference key="15">
    <citation type="journal article" date="2021" name="Am. J. Med. Genet. A">
        <title>Exome sequencing identifies novel missense and deletion variants in RTN4IP1 associated with optic atrophy, global developmental delay, epilepsy, ataxia, and choreoathetosis.</title>
        <authorList>
            <person name="D'Gama A.M."/>
            <person name="England E."/>
            <person name="Madden J.A."/>
            <person name="Shi J."/>
            <person name="Chao K.R."/>
            <person name="Wojcik M.H."/>
            <person name="Torres A.R."/>
            <person name="Tan W.H."/>
            <person name="Berry G.T."/>
            <person name="Prabhu S.P."/>
            <person name="Agrawal P.B."/>
        </authorList>
    </citation>
    <scope>VARIANT OPA10 GLY-88</scope>
</reference>
<reference key="16">
    <citation type="journal article" date="2021" name="J. Neuroophthalmol.">
        <title>Combined Optic Atrophy and Rod-Cone Dystrophy Expands the RTN4IP1 (Optic Atrophy 10) Phenotype.</title>
        <authorList>
            <person name="Rajabian F."/>
            <person name="Manitto M.P."/>
            <person name="Palombo F."/>
            <person name="Caporali L."/>
            <person name="Grazioli A."/>
            <person name="Starace V."/>
            <person name="Arrigo A."/>
            <person name="Cascavilla M.L."/>
            <person name="La Morgia C."/>
            <person name="Barboni P."/>
            <person name="Bandello F."/>
            <person name="Carelli V."/>
            <person name="Battaglia Parodi M."/>
        </authorList>
    </citation>
    <scope>VARIANTS OPA10 144-TRP--VAL-396 DEL AND ARG-216</scope>
</reference>
<reference key="17">
    <citation type="journal article" date="2021" name="Retina">
        <title>A rod-cone dystrophy is systematically associated to the RTN4IP1 recessive optic atrophy.</title>
        <authorList>
            <person name="Meunier I."/>
            <person name="Bocquet B."/>
            <person name="Charif M."/>
            <person name="Dhaenens C.M."/>
            <person name="Manes G."/>
            <person name="Amati-Bonneau P."/>
            <person name="Roubertie A."/>
            <person name="Zanlonghi X."/>
            <person name="Lenaers G."/>
        </authorList>
    </citation>
    <scope>VARIANTS OPA10 HIS-103 AND 201-LYS--VAL-396 DEL</scope>
</reference>
<reference key="18">
    <citation type="journal article" date="2022" name="Cells">
        <title>A Novel Homozygous Founder Variant of RTN4IP1 in Two Consanguineous Saudi Families.</title>
        <authorList>
            <person name="Aldosary M."/>
            <person name="Alsagob M."/>
            <person name="AlQudairy H."/>
            <person name="Gonzalez-Alvarez A.C."/>
            <person name="Arold S.T."/>
            <person name="Dababo M.A."/>
            <person name="Alharbi O.A."/>
            <person name="Almass R."/>
            <person name="AlBakheet A."/>
            <person name="AlSarar D."/>
            <person name="Qari A."/>
            <person name="Al-Ansari M.M."/>
            <person name="Olahova M."/>
            <person name="Al-Shahrani S.A."/>
            <person name="AlSayed M."/>
            <person name="Colak D."/>
            <person name="Taylor R.W."/>
            <person name="AlOwain M."/>
            <person name="Kaya N."/>
        </authorList>
    </citation>
    <scope>VARIANT OPA10 PHE-159</scope>
</reference>
<reference key="19">
    <citation type="journal article" date="2023" name="J. Neuroophthalmol.">
        <title>Whole Genome Sequencing Identifies a Partial Deletion of RTN4IP1 in a Patient With Isolated Optic Atrophy.</title>
        <authorList>
            <consortium name="Genomics England Research Consortium"/>
            <person name="Jurkute N."/>
            <person name="Arno G."/>
            <person name="Webster A.R."/>
            <person name="Yu-Wai-Man P."/>
        </authorList>
    </citation>
    <scope>VARIANT OPA10 CYS-103</scope>
</reference>
<reference key="20">
    <citation type="journal article" date="2024" name="Ophthalmic Genet.">
        <title>RTN4IP1-associated non-syndromic optic neuropathy and rod-cone dystrophy.</title>
        <authorList>
            <person name="Gupta P.R."/>
            <person name="O'Connell K."/>
            <person name="Sullivan J.M."/>
            <person name="Huckfeldt R.M."/>
        </authorList>
    </citation>
    <scope>VARIANT OPA10 ARG-216</scope>
</reference>
<accession>Q8WWV3</accession>
<accession>Q8N9B3</accession>
<accession>Q8WZ66</accession>
<accession>Q9BRA4</accession>
<name>RT4I1_HUMAN</name>
<evidence type="ECO:0000250" key="1">
    <source>
        <dbReference type="UniProtKB" id="Q924D0"/>
    </source>
</evidence>
<evidence type="ECO:0000255" key="2"/>
<evidence type="ECO:0000269" key="3">
    <source>
    </source>
</evidence>
<evidence type="ECO:0000269" key="4">
    <source>
    </source>
</evidence>
<evidence type="ECO:0000269" key="5">
    <source>
    </source>
</evidence>
<evidence type="ECO:0000269" key="6">
    <source>
    </source>
</evidence>
<evidence type="ECO:0000269" key="7">
    <source>
    </source>
</evidence>
<evidence type="ECO:0000269" key="8">
    <source>
    </source>
</evidence>
<evidence type="ECO:0000269" key="9">
    <source>
    </source>
</evidence>
<evidence type="ECO:0000269" key="10">
    <source>
    </source>
</evidence>
<evidence type="ECO:0000269" key="11">
    <source>
    </source>
</evidence>
<evidence type="ECO:0000269" key="12">
    <source>
    </source>
</evidence>
<evidence type="ECO:0000269" key="13">
    <source>
    </source>
</evidence>
<evidence type="ECO:0000269" key="14">
    <source>
    </source>
</evidence>
<evidence type="ECO:0000269" key="15">
    <source>
    </source>
</evidence>
<evidence type="ECO:0000269" key="16">
    <source ref="9"/>
</evidence>
<evidence type="ECO:0000303" key="17">
    <source>
    </source>
</evidence>
<evidence type="ECO:0000303" key="18">
    <source>
    </source>
</evidence>
<evidence type="ECO:0000303" key="19">
    <source>
    </source>
</evidence>
<evidence type="ECO:0000303" key="20">
    <source ref="1"/>
</evidence>
<evidence type="ECO:0000303" key="21">
    <source ref="9"/>
</evidence>
<evidence type="ECO:0000305" key="22"/>
<evidence type="ECO:0000312" key="23">
    <source>
        <dbReference type="HGNC" id="HGNC:18647"/>
    </source>
</evidence>
<evidence type="ECO:0007744" key="24">
    <source>
        <dbReference type="PDB" id="2VN8"/>
    </source>
</evidence>
<evidence type="ECO:0007744" key="25">
    <source>
    </source>
</evidence>
<evidence type="ECO:0007829" key="26">
    <source>
        <dbReference type="PDB" id="2VN8"/>
    </source>
</evidence>
<organism>
    <name type="scientific">Homo sapiens</name>
    <name type="common">Human</name>
    <dbReference type="NCBI Taxonomy" id="9606"/>
    <lineage>
        <taxon>Eukaryota</taxon>
        <taxon>Metazoa</taxon>
        <taxon>Chordata</taxon>
        <taxon>Craniata</taxon>
        <taxon>Vertebrata</taxon>
        <taxon>Euteleostomi</taxon>
        <taxon>Mammalia</taxon>
        <taxon>Eutheria</taxon>
        <taxon>Euarchontoglires</taxon>
        <taxon>Primates</taxon>
        <taxon>Haplorrhini</taxon>
        <taxon>Catarrhini</taxon>
        <taxon>Hominidae</taxon>
        <taxon>Homo</taxon>
    </lineage>
</organism>
<feature type="transit peptide" description="Mitochondrion" evidence="2 25">
    <location>
        <begin position="1"/>
        <end position="40"/>
    </location>
</feature>
<feature type="chain" id="PRO_0000042114" description="NAD(P)H oxidoreductase RTN4IP1, mitochondrial">
    <location>
        <begin position="41"/>
        <end position="396"/>
    </location>
</feature>
<feature type="domain" description="Enoyl reductase (ER)" evidence="2">
    <location>
        <begin position="52"/>
        <end position="393"/>
    </location>
</feature>
<feature type="binding site" evidence="16 24">
    <location>
        <position position="214"/>
    </location>
    <ligand>
        <name>NADPH</name>
        <dbReference type="ChEBI" id="CHEBI:57783"/>
    </ligand>
</feature>
<feature type="binding site" evidence="16 24">
    <location>
        <position position="216"/>
    </location>
    <ligand>
        <name>NADPH</name>
        <dbReference type="ChEBI" id="CHEBI:57783"/>
    </ligand>
</feature>
<feature type="binding site" evidence="16 24">
    <location>
        <position position="217"/>
    </location>
    <ligand>
        <name>NADPH</name>
        <dbReference type="ChEBI" id="CHEBI:57783"/>
    </ligand>
</feature>
<feature type="binding site" evidence="16 24">
    <location>
        <position position="237"/>
    </location>
    <ligand>
        <name>NADPH</name>
        <dbReference type="ChEBI" id="CHEBI:57783"/>
    </ligand>
</feature>
<feature type="binding site" evidence="16 24">
    <location>
        <position position="255"/>
    </location>
    <ligand>
        <name>NADPH</name>
        <dbReference type="ChEBI" id="CHEBI:57783"/>
    </ligand>
</feature>
<feature type="binding site" evidence="16 24">
    <location>
        <position position="276"/>
    </location>
    <ligand>
        <name>NADPH</name>
        <dbReference type="ChEBI" id="CHEBI:57783"/>
    </ligand>
</feature>
<feature type="binding site" evidence="16 24">
    <location>
        <position position="300"/>
    </location>
    <ligand>
        <name>NADPH</name>
        <dbReference type="ChEBI" id="CHEBI:57783"/>
    </ligand>
</feature>
<feature type="binding site" evidence="16 24">
    <location>
        <position position="341"/>
    </location>
    <ligand>
        <name>NADPH</name>
        <dbReference type="ChEBI" id="CHEBI:57783"/>
    </ligand>
</feature>
<feature type="binding site" evidence="16 24">
    <location>
        <position position="343"/>
    </location>
    <ligand>
        <name>NADPH</name>
        <dbReference type="ChEBI" id="CHEBI:57783"/>
    </ligand>
</feature>
<feature type="binding site" evidence="16 24">
    <location>
        <position position="386"/>
    </location>
    <ligand>
        <name>NADPH</name>
        <dbReference type="ChEBI" id="CHEBI:57783"/>
    </ligand>
</feature>
<feature type="binding site" evidence="16 24">
    <location>
        <position position="387"/>
    </location>
    <ligand>
        <name>NADPH</name>
        <dbReference type="ChEBI" id="CHEBI:57783"/>
    </ligand>
</feature>
<feature type="binding site" evidence="16 24">
    <location>
        <position position="388"/>
    </location>
    <ligand>
        <name>NADPH</name>
        <dbReference type="ChEBI" id="CHEBI:57783"/>
    </ligand>
</feature>
<feature type="splice variant" id="VSP_015742" description="In isoform 2." evidence="18">
    <location>
        <begin position="1"/>
        <end position="100"/>
    </location>
</feature>
<feature type="splice variant" id="VSP_015743" description="In isoform 3." evidence="20">
    <original>VLILGASGGVGTFAIQVMK</original>
    <variation>ISGKESIIAGHFSWPVAH</variation>
    <location>
        <begin position="208"/>
        <end position="226"/>
    </location>
</feature>
<feature type="splice variant" id="VSP_015744" description="In isoform 3." evidence="20">
    <location>
        <begin position="227"/>
        <end position="396"/>
    </location>
</feature>
<feature type="sequence variant" id="VAR_090119" description="In OPA10; uncertain significance." evidence="6">
    <original>M</original>
    <variation>I</variation>
    <location>
        <position position="43"/>
    </location>
</feature>
<feature type="sequence variant" id="VAR_090120" description="In OPA10; uncertain significance; dbSNP:rs939243610." evidence="6">
    <original>Y</original>
    <variation>C</variation>
    <location>
        <position position="51"/>
    </location>
</feature>
<feature type="sequence variant" id="VAR_090121" description="In OPA10; uncertain significance; dbSNP:rs1776724608." evidence="9">
    <original>V</original>
    <variation>G</variation>
    <location>
        <position position="88"/>
    </location>
</feature>
<feature type="sequence variant" id="VAR_090122" description="In OPA10; uncertain significance; dbSNP:rs779178575." evidence="12">
    <original>R</original>
    <variation>C</variation>
    <location>
        <position position="103"/>
    </location>
</feature>
<feature type="sequence variant" id="VAR_076369" description="In OPA10; strongly reduced NAD(P)H oxidoreductase activity; dbSNP:rs372054380." evidence="4 5 6 8 11 14">
    <original>R</original>
    <variation>H</variation>
    <location>
        <position position="103"/>
    </location>
</feature>
<feature type="sequence variant" id="VAR_090123" description="In OPA10; uncertain significance; dbSNP:rs1582392486." evidence="6">
    <original>P</original>
    <variation>S</variation>
    <location>
        <position position="105"/>
    </location>
</feature>
<feature type="sequence variant" id="VAR_090124" description="In OPA10." evidence="6 10">
    <location>
        <begin position="144"/>
        <end position="396"/>
    </location>
</feature>
<feature type="sequence variant" id="VAR_090125" description="In OPA10; uncertain significance." evidence="13">
    <original>V</original>
    <variation>F</variation>
    <location>
        <position position="159"/>
    </location>
</feature>
<feature type="sequence variant" id="VAR_090126" description="In OPA10; uncertain significance; dbSNP:rs2114677062." evidence="6">
    <original>S</original>
    <variation>F</variation>
    <location>
        <position position="167"/>
    </location>
</feature>
<feature type="sequence variant" id="VAR_090127" description="In OPA10." evidence="4 11">
    <location>
        <begin position="201"/>
        <end position="396"/>
    </location>
</feature>
<feature type="sequence variant" id="VAR_090128" description="In OPA10; dbSNP:rs1304915034." evidence="7 10 15">
    <original>G</original>
    <variation>R</variation>
    <location>
        <position position="216"/>
    </location>
</feature>
<feature type="sequence variant" id="VAR_090129" description="In OPA10; uncertain significance; dbSNP:rs145695118." evidence="6">
    <original>G</original>
    <variation>E</variation>
    <location>
        <position position="321"/>
    </location>
</feature>
<feature type="sequence variant" id="VAR_090130" description="In OPA10; uncertain significance." evidence="6">
    <original>L</original>
    <variation>P</variation>
    <location>
        <position position="356"/>
    </location>
</feature>
<feature type="sequence variant" id="VAR_090131" description="In OPA10; uncertain significance; dbSNP:rs1775080757." evidence="6">
    <original>I</original>
    <variation>F</variation>
    <location>
        <position position="362"/>
    </location>
</feature>
<feature type="sequence variant" id="VAR_090132" description="In OPA10; uncertain significance." evidence="7">
    <location>
        <begin position="388"/>
        <end position="396"/>
    </location>
</feature>
<feature type="mutagenesis site" description="Abolished NAD(P)H oxidoreductase activity." evidence="14">
    <original>G</original>
    <variation>A</variation>
    <location>
        <position position="215"/>
    </location>
</feature>
<feature type="sequence conflict" description="In Ref. 1; AAL34525." evidence="22" ref="1">
    <original>M</original>
    <variation>V</variation>
    <location>
        <position position="65"/>
    </location>
</feature>
<feature type="sequence conflict" description="In Ref. 1; AAL40856." evidence="22" ref="1">
    <original>N</original>
    <variation>Y</variation>
    <location>
        <position position="84"/>
    </location>
</feature>
<feature type="sequence conflict" description="In Ref. 2; BAC04499." evidence="22" ref="2">
    <original>N</original>
    <variation>S</variation>
    <location>
        <position position="164"/>
    </location>
</feature>
<feature type="sequence conflict" description="In Ref. 1; AAL34525." evidence="22" ref="1">
    <original>P</original>
    <variation>S</variation>
    <location>
        <position position="182"/>
    </location>
</feature>
<feature type="sequence conflict" description="In Ref. 1; AAL40856." evidence="22" ref="1">
    <original>M</original>
    <variation>T</variation>
    <location>
        <position position="317"/>
    </location>
</feature>
<feature type="strand" evidence="26">
    <location>
        <begin position="45"/>
        <end position="50"/>
    </location>
</feature>
<feature type="helix" evidence="26">
    <location>
        <begin position="54"/>
        <end position="56"/>
    </location>
</feature>
<feature type="strand" evidence="26">
    <location>
        <begin position="58"/>
        <end position="63"/>
    </location>
</feature>
<feature type="strand" evidence="26">
    <location>
        <begin position="73"/>
        <end position="83"/>
    </location>
</feature>
<feature type="helix" evidence="26">
    <location>
        <begin position="85"/>
        <end position="91"/>
    </location>
</feature>
<feature type="turn" evidence="26">
    <location>
        <begin position="92"/>
        <end position="95"/>
    </location>
</feature>
<feature type="helix" evidence="26">
    <location>
        <begin position="96"/>
        <end position="103"/>
    </location>
</feature>
<feature type="turn" evidence="26">
    <location>
        <begin position="111"/>
        <end position="114"/>
    </location>
</feature>
<feature type="strand" evidence="26">
    <location>
        <begin position="122"/>
        <end position="130"/>
    </location>
</feature>
<feature type="strand" evidence="26">
    <location>
        <begin position="142"/>
        <end position="146"/>
    </location>
</feature>
<feature type="strand" evidence="26">
    <location>
        <begin position="154"/>
        <end position="162"/>
    </location>
</feature>
<feature type="helix" evidence="26">
    <location>
        <begin position="163"/>
        <end position="165"/>
    </location>
</feature>
<feature type="strand" evidence="26">
    <location>
        <begin position="166"/>
        <end position="168"/>
    </location>
</feature>
<feature type="helix" evidence="26">
    <location>
        <begin position="175"/>
        <end position="178"/>
    </location>
</feature>
<feature type="helix" evidence="26">
    <location>
        <begin position="182"/>
        <end position="192"/>
    </location>
</feature>
<feature type="turn" evidence="26">
    <location>
        <begin position="193"/>
        <end position="196"/>
    </location>
</feature>
<feature type="turn" evidence="26">
    <location>
        <begin position="200"/>
        <end position="202"/>
    </location>
</feature>
<feature type="strand" evidence="26">
    <location>
        <begin position="207"/>
        <end position="212"/>
    </location>
</feature>
<feature type="helix" evidence="26">
    <location>
        <begin position="216"/>
        <end position="227"/>
    </location>
</feature>
<feature type="strand" evidence="26">
    <location>
        <begin position="231"/>
        <end position="236"/>
    </location>
</feature>
<feature type="helix" evidence="26">
    <location>
        <begin position="238"/>
        <end position="240"/>
    </location>
</feature>
<feature type="helix" evidence="26">
    <location>
        <begin position="241"/>
        <end position="246"/>
    </location>
</feature>
<feature type="strand" evidence="26">
    <location>
        <begin position="250"/>
        <end position="254"/>
    </location>
</feature>
<feature type="helix" evidence="26">
    <location>
        <begin position="260"/>
        <end position="265"/>
    </location>
</feature>
<feature type="strand" evidence="26">
    <location>
        <begin position="270"/>
        <end position="277"/>
    </location>
</feature>
<feature type="helix" evidence="26">
    <location>
        <begin position="281"/>
        <end position="284"/>
    </location>
</feature>
<feature type="helix" evidence="26">
    <location>
        <begin position="285"/>
        <end position="288"/>
    </location>
</feature>
<feature type="strand" evidence="26">
    <location>
        <begin position="291"/>
        <end position="293"/>
    </location>
</feature>
<feature type="strand" evidence="26">
    <location>
        <begin position="296"/>
        <end position="300"/>
    </location>
</feature>
<feature type="helix" evidence="26">
    <location>
        <begin position="304"/>
        <end position="311"/>
    </location>
</feature>
<feature type="helix" evidence="26">
    <location>
        <begin position="313"/>
        <end position="333"/>
    </location>
</feature>
<feature type="strand" evidence="26">
    <location>
        <begin position="337"/>
        <end position="340"/>
    </location>
</feature>
<feature type="helix" evidence="26">
    <location>
        <begin position="347"/>
        <end position="358"/>
    </location>
</feature>
<feature type="strand" evidence="26">
    <location>
        <begin position="366"/>
        <end position="371"/>
    </location>
</feature>
<feature type="helix" evidence="26">
    <location>
        <begin position="372"/>
        <end position="374"/>
    </location>
</feature>
<feature type="helix" evidence="26">
    <location>
        <begin position="375"/>
        <end position="384"/>
    </location>
</feature>
<feature type="strand" evidence="26">
    <location>
        <begin position="388"/>
        <end position="394"/>
    </location>
</feature>
<dbReference type="EC" id="1.6.5.-" evidence="14"/>
<dbReference type="EMBL" id="AF439711">
    <property type="protein sequence ID" value="AAL34525.1"/>
    <property type="molecule type" value="mRNA"/>
</dbReference>
<dbReference type="EMBL" id="AY063761">
    <property type="protein sequence ID" value="AAL40856.1"/>
    <property type="molecule type" value="mRNA"/>
</dbReference>
<dbReference type="EMBL" id="AK095207">
    <property type="protein sequence ID" value="BAC04499.1"/>
    <property type="molecule type" value="mRNA"/>
</dbReference>
<dbReference type="EMBL" id="AL390074">
    <property type="status" value="NOT_ANNOTATED_CDS"/>
    <property type="molecule type" value="Genomic_DNA"/>
</dbReference>
<dbReference type="EMBL" id="BC006399">
    <property type="protein sequence ID" value="AAH06399.2"/>
    <property type="molecule type" value="mRNA"/>
</dbReference>
<dbReference type="CCDS" id="CCDS5056.1">
    <molecule id="Q8WWV3-1"/>
</dbReference>
<dbReference type="RefSeq" id="NP_001305675.1">
    <molecule id="Q8WWV3-2"/>
    <property type="nucleotide sequence ID" value="NM_001318746.1"/>
</dbReference>
<dbReference type="RefSeq" id="NP_116119.2">
    <molecule id="Q8WWV3-1"/>
    <property type="nucleotide sequence ID" value="NM_032730.5"/>
</dbReference>
<dbReference type="PDB" id="2VN8">
    <property type="method" value="X-ray"/>
    <property type="resolution" value="2.10 A"/>
    <property type="chains" value="A/B=45-396"/>
</dbReference>
<dbReference type="PDBsum" id="2VN8"/>
<dbReference type="SMR" id="Q8WWV3"/>
<dbReference type="BioGRID" id="124276">
    <property type="interactions" value="90"/>
</dbReference>
<dbReference type="FunCoup" id="Q8WWV3">
    <property type="interactions" value="1296"/>
</dbReference>
<dbReference type="IntAct" id="Q8WWV3">
    <property type="interactions" value="38"/>
</dbReference>
<dbReference type="MINT" id="Q8WWV3"/>
<dbReference type="STRING" id="9606.ENSP00000358059"/>
<dbReference type="GlyCosmos" id="Q8WWV3">
    <property type="glycosylation" value="1 site, 1 glycan"/>
</dbReference>
<dbReference type="GlyGen" id="Q8WWV3">
    <property type="glycosylation" value="1 site, 1 O-linked glycan (1 site)"/>
</dbReference>
<dbReference type="iPTMnet" id="Q8WWV3"/>
<dbReference type="PhosphoSitePlus" id="Q8WWV3"/>
<dbReference type="SwissPalm" id="Q8WWV3"/>
<dbReference type="BioMuta" id="RTN4IP1"/>
<dbReference type="DMDM" id="76789669"/>
<dbReference type="jPOST" id="Q8WWV3"/>
<dbReference type="MassIVE" id="Q8WWV3"/>
<dbReference type="PaxDb" id="9606-ENSP00000358059"/>
<dbReference type="PeptideAtlas" id="Q8WWV3"/>
<dbReference type="ProteomicsDB" id="74937">
    <molecule id="Q8WWV3-1"/>
</dbReference>
<dbReference type="ProteomicsDB" id="74938">
    <molecule id="Q8WWV3-2"/>
</dbReference>
<dbReference type="ProteomicsDB" id="74939">
    <molecule id="Q8WWV3-3"/>
</dbReference>
<dbReference type="Pumba" id="Q8WWV3"/>
<dbReference type="Antibodypedia" id="32150">
    <property type="antibodies" value="244 antibodies from 24 providers"/>
</dbReference>
<dbReference type="DNASU" id="84816"/>
<dbReference type="Ensembl" id="ENST00000369063.8">
    <molecule id="Q8WWV3-1"/>
    <property type="protein sequence ID" value="ENSP00000358059.3"/>
    <property type="gene ID" value="ENSG00000130347.13"/>
</dbReference>
<dbReference type="GeneID" id="84816"/>
<dbReference type="KEGG" id="hsa:84816"/>
<dbReference type="MANE-Select" id="ENST00000369063.8">
    <property type="protein sequence ID" value="ENSP00000358059.3"/>
    <property type="RefSeq nucleotide sequence ID" value="NM_032730.5"/>
    <property type="RefSeq protein sequence ID" value="NP_116119.2"/>
</dbReference>
<dbReference type="UCSC" id="uc003prj.4">
    <molecule id="Q8WWV3-1"/>
    <property type="organism name" value="human"/>
</dbReference>
<dbReference type="AGR" id="HGNC:18647"/>
<dbReference type="CTD" id="84816"/>
<dbReference type="DisGeNET" id="84816"/>
<dbReference type="GeneCards" id="RTN4IP1"/>
<dbReference type="HGNC" id="HGNC:18647">
    <property type="gene designation" value="RTN4IP1"/>
</dbReference>
<dbReference type="HPA" id="ENSG00000130347">
    <property type="expression patterns" value="Low tissue specificity"/>
</dbReference>
<dbReference type="MalaCards" id="RTN4IP1"/>
<dbReference type="MIM" id="610502">
    <property type="type" value="gene"/>
</dbReference>
<dbReference type="MIM" id="616732">
    <property type="type" value="phenotype"/>
</dbReference>
<dbReference type="neXtProt" id="NX_Q8WWV3"/>
<dbReference type="OpenTargets" id="ENSG00000130347"/>
<dbReference type="Orphanet" id="98676">
    <property type="disease" value="Autosomal recessive isolated optic atrophy"/>
</dbReference>
<dbReference type="PharmGKB" id="PA38619"/>
<dbReference type="VEuPathDB" id="HostDB:ENSG00000130347"/>
<dbReference type="eggNOG" id="KOG1198">
    <property type="taxonomic scope" value="Eukaryota"/>
</dbReference>
<dbReference type="GeneTree" id="ENSGT00880000138028"/>
<dbReference type="HOGENOM" id="CLU_026673_3_3_1"/>
<dbReference type="InParanoid" id="Q8WWV3"/>
<dbReference type="OMA" id="TSWQALK"/>
<dbReference type="OrthoDB" id="48317at2759"/>
<dbReference type="PAN-GO" id="Q8WWV3">
    <property type="GO annotations" value="1 GO annotation based on evolutionary models"/>
</dbReference>
<dbReference type="PhylomeDB" id="Q8WWV3"/>
<dbReference type="TreeFam" id="TF313919"/>
<dbReference type="PathwayCommons" id="Q8WWV3"/>
<dbReference type="SignaLink" id="Q8WWV3"/>
<dbReference type="UniPathway" id="UPA00232"/>
<dbReference type="BioGRID-ORCS" id="84816">
    <property type="hits" value="91 hits in 1162 CRISPR screens"/>
</dbReference>
<dbReference type="ChiTaRS" id="RTN4IP1">
    <property type="organism name" value="human"/>
</dbReference>
<dbReference type="EvolutionaryTrace" id="Q8WWV3"/>
<dbReference type="GenomeRNAi" id="84816"/>
<dbReference type="Pharos" id="Q8WWV3">
    <property type="development level" value="Tbio"/>
</dbReference>
<dbReference type="PRO" id="PR:Q8WWV3"/>
<dbReference type="Proteomes" id="UP000005640">
    <property type="component" value="Chromosome 6"/>
</dbReference>
<dbReference type="RNAct" id="Q8WWV3">
    <property type="molecule type" value="protein"/>
</dbReference>
<dbReference type="Bgee" id="ENSG00000130347">
    <property type="expression patterns" value="Expressed in secondary oocyte and 154 other cell types or tissues"/>
</dbReference>
<dbReference type="ExpressionAtlas" id="Q8WWV3">
    <property type="expression patterns" value="baseline and differential"/>
</dbReference>
<dbReference type="GO" id="GO:0005759">
    <property type="term" value="C:mitochondrial matrix"/>
    <property type="evidence" value="ECO:0000314"/>
    <property type="project" value="FlyBase"/>
</dbReference>
<dbReference type="GO" id="GO:0005741">
    <property type="term" value="C:mitochondrial outer membrane"/>
    <property type="evidence" value="ECO:0000314"/>
    <property type="project" value="UniProtKB"/>
</dbReference>
<dbReference type="GO" id="GO:0005739">
    <property type="term" value="C:mitochondrion"/>
    <property type="evidence" value="ECO:0006056"/>
    <property type="project" value="FlyBase"/>
</dbReference>
<dbReference type="GO" id="GO:0008753">
    <property type="term" value="F:NADPH dehydrogenase (quinone) activity"/>
    <property type="evidence" value="ECO:0000314"/>
    <property type="project" value="FlyBase"/>
</dbReference>
<dbReference type="GO" id="GO:0008270">
    <property type="term" value="F:zinc ion binding"/>
    <property type="evidence" value="ECO:0007669"/>
    <property type="project" value="InterPro"/>
</dbReference>
<dbReference type="GO" id="GO:0007399">
    <property type="term" value="P:nervous system development"/>
    <property type="evidence" value="ECO:0007669"/>
    <property type="project" value="UniProtKB-KW"/>
</dbReference>
<dbReference type="GO" id="GO:0050773">
    <property type="term" value="P:regulation of dendrite development"/>
    <property type="evidence" value="ECO:0000250"/>
    <property type="project" value="UniProtKB"/>
</dbReference>
<dbReference type="GO" id="GO:0006744">
    <property type="term" value="P:ubiquinone biosynthetic process"/>
    <property type="evidence" value="ECO:0000314"/>
    <property type="project" value="FlyBase"/>
</dbReference>
<dbReference type="CDD" id="cd08248">
    <property type="entry name" value="RTN4I1"/>
    <property type="match status" value="1"/>
</dbReference>
<dbReference type="FunFam" id="3.40.50.720:FF:000147">
    <property type="entry name" value="Reticulon-4-interacting protein 1 homolog, mitochondrial"/>
    <property type="match status" value="1"/>
</dbReference>
<dbReference type="FunFam" id="3.90.180.10:FF:000009">
    <property type="entry name" value="Reticulon-4-interacting protein 1, mitochondrial"/>
    <property type="match status" value="1"/>
</dbReference>
<dbReference type="Gene3D" id="3.90.180.10">
    <property type="entry name" value="Medium-chain alcohol dehydrogenases, catalytic domain"/>
    <property type="match status" value="1"/>
</dbReference>
<dbReference type="Gene3D" id="3.40.50.720">
    <property type="entry name" value="NAD(P)-binding Rossmann-like Domain"/>
    <property type="match status" value="1"/>
</dbReference>
<dbReference type="InterPro" id="IPR013154">
    <property type="entry name" value="ADH-like_N"/>
</dbReference>
<dbReference type="InterPro" id="IPR011032">
    <property type="entry name" value="GroES-like_sf"/>
</dbReference>
<dbReference type="InterPro" id="IPR036291">
    <property type="entry name" value="NAD(P)-bd_dom_sf"/>
</dbReference>
<dbReference type="InterPro" id="IPR020843">
    <property type="entry name" value="PKS_ER"/>
</dbReference>
<dbReference type="InterPro" id="IPR002364">
    <property type="entry name" value="Quin_OxRdtase/zeta-crystal_CS"/>
</dbReference>
<dbReference type="InterPro" id="IPR037397">
    <property type="entry name" value="RTN4I1"/>
</dbReference>
<dbReference type="InterPro" id="IPR050700">
    <property type="entry name" value="YIM1/Zinc_Alcohol_DH_Fams"/>
</dbReference>
<dbReference type="PANTHER" id="PTHR11695">
    <property type="entry name" value="ALCOHOL DEHYDROGENASE RELATED"/>
    <property type="match status" value="1"/>
</dbReference>
<dbReference type="PANTHER" id="PTHR11695:SF294">
    <property type="entry name" value="RETICULON-4-INTERACTING PROTEIN 1, MITOCHONDRIAL"/>
    <property type="match status" value="1"/>
</dbReference>
<dbReference type="Pfam" id="PF08240">
    <property type="entry name" value="ADH_N"/>
    <property type="match status" value="1"/>
</dbReference>
<dbReference type="Pfam" id="PF13602">
    <property type="entry name" value="ADH_zinc_N_2"/>
    <property type="match status" value="1"/>
</dbReference>
<dbReference type="SMART" id="SM00829">
    <property type="entry name" value="PKS_ER"/>
    <property type="match status" value="1"/>
</dbReference>
<dbReference type="SUPFAM" id="SSF50129">
    <property type="entry name" value="GroES-like"/>
    <property type="match status" value="1"/>
</dbReference>
<dbReference type="SUPFAM" id="SSF51735">
    <property type="entry name" value="NAD(P)-binding Rossmann-fold domains"/>
    <property type="match status" value="1"/>
</dbReference>
<dbReference type="PROSITE" id="PS01162">
    <property type="entry name" value="QOR_ZETA_CRYSTAL"/>
    <property type="match status" value="1"/>
</dbReference>
<sequence length="396" mass="43590">MEFLKTCVLRRNACTAVCFWRSKVVQKPSVRRISTTSPRSTVMPAWVIDKYGKNEVLRFTQNMMMPIIHYPNEVIVKVHAASVNPIDVNMRSGYGATALNMKRDPLHVKIKGEEFPLTLGRDVSGVVMECGLDVKYFKPGDEVWAAVPPWKQGTLSEFVVVSGNEVSHKPKSLTHTQAASLPYVALTAWSAINKVGGLNDKNCTGKRVLILGASGGVGTFAIQVMKAWDAHVTAVCSQDASELVRKLGADDVIDYKSGSVEEQLKSLKPFDFILDNVGGSTETWAPDFLKKWSGATYVTLVTPFLLNMDRLGIADGMLQTGVTVGSKALKHFWKGVHYRWAFFMASGPCLDDIAELVDAGKIRPVIEQTFPFSKVPEAFLKVERGHARGKTVINVV</sequence>
<keyword id="KW-0002">3D-structure</keyword>
<keyword id="KW-0025">Alternative splicing</keyword>
<keyword id="KW-0225">Disease variant</keyword>
<keyword id="KW-0887">Epilepsy</keyword>
<keyword id="KW-0991">Intellectual disability</keyword>
<keyword id="KW-0472">Membrane</keyword>
<keyword id="KW-0496">Mitochondrion</keyword>
<keyword id="KW-1000">Mitochondrion outer membrane</keyword>
<keyword id="KW-0521">NADP</keyword>
<keyword id="KW-0524">Neurogenesis</keyword>
<keyword id="KW-0547">Nucleotide-binding</keyword>
<keyword id="KW-0560">Oxidoreductase</keyword>
<keyword id="KW-1267">Proteomics identification</keyword>
<keyword id="KW-1185">Reference proteome</keyword>
<keyword id="KW-0809">Transit peptide</keyword>
<keyword id="KW-0831">Ubiquinone biosynthesis</keyword>
<comment type="function">
    <text evidence="1 14">NAD(P)H oxidoreductase involved in the ubiquinone biosynthetic pathway (PubMed:37884807). Required for the O-methyltransferase activity of COQ3 (PubMed:37884807). Able to catalyze the oxidoreduction of 3-demethylubiquinone into 3-demethylubiquinol in vitro (PubMed:37884807). However, it is unclear if 3-demethylubiquinone constitutes a substrate in vivo (PubMed:37884807). May also play a role in the regulation of retinal ganglion cell (RGC) neurite outgrowth, and hence in the development of the inner retina and optic nerve (By similarity). Appears to be a potent inhibitor of regeneration following spinal cord injury (By similarity).</text>
</comment>
<comment type="catalytic activity">
    <reaction evidence="14">
        <text>a 3-demethylubiquinone + NADH + 2 H(+) = a 3-demethylubiquinol + NAD(+)</text>
        <dbReference type="Rhea" id="RHEA:83235"/>
        <dbReference type="Rhea" id="RHEA-COMP:10914"/>
        <dbReference type="Rhea" id="RHEA-COMP:19654"/>
        <dbReference type="ChEBI" id="CHEBI:15378"/>
        <dbReference type="ChEBI" id="CHEBI:57540"/>
        <dbReference type="ChEBI" id="CHEBI:57945"/>
        <dbReference type="ChEBI" id="CHEBI:84422"/>
        <dbReference type="ChEBI" id="CHEBI:231825"/>
    </reaction>
</comment>
<comment type="catalytic activity">
    <reaction evidence="14">
        <text>a 3-demethylubiquinone + NADPH + 2 H(+) = a 3-demethylubiquinol + NADP(+)</text>
        <dbReference type="Rhea" id="RHEA:83239"/>
        <dbReference type="Rhea" id="RHEA-COMP:10914"/>
        <dbReference type="Rhea" id="RHEA-COMP:19654"/>
        <dbReference type="ChEBI" id="CHEBI:15378"/>
        <dbReference type="ChEBI" id="CHEBI:57783"/>
        <dbReference type="ChEBI" id="CHEBI:58349"/>
        <dbReference type="ChEBI" id="CHEBI:84422"/>
        <dbReference type="ChEBI" id="CHEBI:231825"/>
    </reaction>
</comment>
<comment type="catalytic activity">
    <reaction evidence="14">
        <text>3-demethylubiquinone-10 + NADH + 2 H(+) = 3-demethylubiquinol-10 + NAD(+)</text>
        <dbReference type="Rhea" id="RHEA:83243"/>
        <dbReference type="ChEBI" id="CHEBI:15378"/>
        <dbReference type="ChEBI" id="CHEBI:57540"/>
        <dbReference type="ChEBI" id="CHEBI:57945"/>
        <dbReference type="ChEBI" id="CHEBI:64182"/>
        <dbReference type="ChEBI" id="CHEBI:231824"/>
    </reaction>
</comment>
<comment type="catalytic activity">
    <reaction evidence="14">
        <text>3-demethylubiquinone-10 + NADPH + 2 H(+) = 3-demethylubiquinol-10 + NADP(+)</text>
        <dbReference type="Rhea" id="RHEA:83247"/>
        <dbReference type="ChEBI" id="CHEBI:15378"/>
        <dbReference type="ChEBI" id="CHEBI:57783"/>
        <dbReference type="ChEBI" id="CHEBI:58349"/>
        <dbReference type="ChEBI" id="CHEBI:64182"/>
        <dbReference type="ChEBI" id="CHEBI:231824"/>
    </reaction>
</comment>
<comment type="pathway">
    <text evidence="14">Cofactor biosynthesis; ubiquinone biosynthesis.</text>
</comment>
<comment type="subunit">
    <text evidence="1">Interacts with RTN4, UQCRC1 and UQCRC2.</text>
</comment>
<comment type="interaction">
    <interactant intactId="EBI-743502">
        <id>Q8WWV3</id>
    </interactant>
    <interactant intactId="EBI-2875816">
        <id>Q9NP61</id>
        <label>ARFGAP3</label>
    </interactant>
    <organismsDiffer>false</organismsDiffer>
    <experiments>3</experiments>
</comment>
<comment type="interaction">
    <interactant intactId="EBI-743502">
        <id>Q8WWV3</id>
    </interactant>
    <interactant intactId="EBI-6871750">
        <id>Q9BS16</id>
        <label>CENPK</label>
    </interactant>
    <organismsDiffer>false</organismsDiffer>
    <experiments>3</experiments>
</comment>
<comment type="interaction">
    <interactant intactId="EBI-743502">
        <id>Q8WWV3</id>
    </interactant>
    <interactant intactId="EBI-1188472">
        <id>P78358</id>
        <label>CTAG1B</label>
    </interactant>
    <organismsDiffer>false</organismsDiffer>
    <experiments>6</experiments>
</comment>
<comment type="interaction">
    <interactant intactId="EBI-743502">
        <id>Q8WWV3</id>
    </interactant>
    <interactant intactId="EBI-2681068">
        <id>Q8TAM6</id>
        <label>ERMN</label>
    </interactant>
    <organismsDiffer>false</organismsDiffer>
    <experiments>3</experiments>
</comment>
<comment type="interaction">
    <interactant intactId="EBI-743502">
        <id>Q8WWV3</id>
    </interactant>
    <interactant intactId="EBI-447646">
        <id>Q9UJY4</id>
        <label>GGA2</label>
    </interactant>
    <organismsDiffer>false</organismsDiffer>
    <experiments>3</experiments>
</comment>
<comment type="interaction">
    <interactant intactId="EBI-743502">
        <id>Q8WWV3</id>
    </interactant>
    <interactant intactId="EBI-1052734">
        <id>Q7Z353</id>
        <label>HDX</label>
    </interactant>
    <organismsDiffer>false</organismsDiffer>
    <experiments>3</experiments>
</comment>
<comment type="interaction">
    <interactant intactId="EBI-743502">
        <id>Q8WWV3</id>
    </interactant>
    <interactant intactId="EBI-2341610">
        <id>Q9NX47</id>
        <label>MARCHF5</label>
    </interactant>
    <organismsDiffer>false</organismsDiffer>
    <experiments>3</experiments>
</comment>
<comment type="interaction">
    <interactant intactId="EBI-743502">
        <id>Q8WWV3</id>
    </interactant>
    <interactant intactId="EBI-12252736">
        <id>Q12972-2</id>
        <label>PPP1R8</label>
    </interactant>
    <organismsDiffer>false</organismsDiffer>
    <experiments>3</experiments>
</comment>
<comment type="interaction">
    <interactant intactId="EBI-743502">
        <id>Q8WWV3</id>
    </interactant>
    <interactant intactId="EBI-2352802">
        <id>Q9BRP8</id>
        <label>PYM1</label>
    </interactant>
    <organismsDiffer>false</organismsDiffer>
    <experiments>3</experiments>
</comment>
<comment type="interaction">
    <interactant intactId="EBI-743502">
        <id>Q8WWV3</id>
    </interactant>
    <interactant intactId="EBI-10489476">
        <id>Q96CP1</id>
        <label>RELA</label>
    </interactant>
    <organismsDiffer>false</organismsDiffer>
    <experiments>5</experiments>
</comment>
<comment type="interaction">
    <interactant intactId="EBI-743502">
        <id>Q8WWV3</id>
    </interactant>
    <interactant intactId="EBI-11984663">
        <id>Q06455-2</id>
        <label>RUNX1T1</label>
    </interactant>
    <organismsDiffer>false</organismsDiffer>
    <experiments>3</experiments>
</comment>
<comment type="interaction">
    <interactant intactId="EBI-743502">
        <id>Q8WWV3</id>
    </interactant>
    <interactant intactId="EBI-1222181">
        <id>Q9H7N4</id>
        <label>SCAF1</label>
    </interactant>
    <organismsDiffer>false</organismsDiffer>
    <experiments>3</experiments>
</comment>
<comment type="interaction">
    <interactant intactId="EBI-743502">
        <id>Q8WWV3</id>
    </interactant>
    <interactant intactId="EBI-396727">
        <id>Q9HAU4</id>
        <label>SMURF2</label>
    </interactant>
    <organismsDiffer>false</organismsDiffer>
    <experiments>3</experiments>
</comment>
<comment type="interaction">
    <interactant intactId="EBI-743502">
        <id>Q8WWV3</id>
    </interactant>
    <interactant intactId="EBI-17775963">
        <id>Q9BX66-7</id>
        <label>SORBS1</label>
    </interactant>
    <organismsDiffer>false</organismsDiffer>
    <experiments>3</experiments>
</comment>
<comment type="interaction">
    <interactant intactId="EBI-743502">
        <id>Q8WWV3</id>
    </interactant>
    <interactant intactId="EBI-747743">
        <id>Q9GZV5</id>
        <label>WWTR1</label>
    </interactant>
    <organismsDiffer>false</organismsDiffer>
    <experiments>3</experiments>
</comment>
<comment type="interaction">
    <interactant intactId="EBI-743502">
        <id>Q8WWV3</id>
    </interactant>
    <interactant intactId="EBI-444225">
        <id>Q15942</id>
        <label>ZYX</label>
    </interactant>
    <organismsDiffer>false</organismsDiffer>
    <experiments>5</experiments>
</comment>
<comment type="subcellular location">
    <subcellularLocation>
        <location evidence="14">Mitochondrion matrix</location>
    </subcellularLocation>
    <subcellularLocation>
        <location evidence="3 4">Mitochondrion outer membrane</location>
    </subcellularLocation>
    <text evidence="4 14">Mainly localizes to the mitochondrial matrix (PubMed:37884807). Also colocalizes with the endoplasmic reticulum HSPA5 at spots corresponding to contacts with mitochondria (PubMed:26593267).</text>
</comment>
<comment type="alternative products">
    <event type="alternative splicing"/>
    <isoform>
        <id>Q8WWV3-1</id>
        <name>1</name>
        <sequence type="displayed"/>
    </isoform>
    <isoform>
        <id>Q8WWV3-2</id>
        <name>2</name>
        <sequence type="described" ref="VSP_015742"/>
    </isoform>
    <isoform>
        <id>Q8WWV3-3</id>
        <name>3</name>
        <name>Short</name>
        <sequence type="described" ref="VSP_015743 VSP_015744"/>
    </isoform>
</comment>
<comment type="tissue specificity">
    <text evidence="3">Widely expressed in mitochondria-enriched tissues (PubMed:12067236). Found in heart, muscle, kidney, liver, brain and placenta (PubMed:12067236).</text>
</comment>
<comment type="disease" evidence="4 5 6 7 8 9 10 11 12 13 14 15">
    <disease id="DI-04624">
        <name>Optic atrophy 10 with or without ataxia, impaired intellectual development, and seizures</name>
        <acronym>OPA10</acronym>
        <description>An autosomal recessive disease characterized by progressive visual loss in association with optic atrophy. Atrophy of the optic disk indicates a deficiency in the number of nerve fibers which arise in the retina and converge to form the optic disk, optic nerve, optic chiasm and optic tracts. OPA10 patients may also manifest mild ataxia, mild intellectual disability and, rarely, generalized seizures.</description>
        <dbReference type="MIM" id="616732"/>
    </disease>
    <text>The disease is caused by variants affecting the gene represented in this entry.</text>
</comment>
<comment type="similarity">
    <text evidence="22">Belongs to the zinc-containing alcohol dehydrogenase family. Quinone oxidoreductase subfamily.</text>
</comment>
<protein>
    <recommendedName>
        <fullName evidence="22">NAD(P)H oxidoreductase RTN4IP1, mitochondrial</fullName>
        <ecNumber evidence="14">1.6.5.-</ecNumber>
    </recommendedName>
    <alternativeName>
        <fullName evidence="17">NOGO-interacting mitochondrial protein</fullName>
    </alternativeName>
    <alternativeName>
        <fullName evidence="21">Reticulon-4-interacting protein 1</fullName>
    </alternativeName>
</protein>
<gene>
    <name evidence="19 23" type="primary">RTN4IP1</name>
    <name evidence="17" type="synonym">NIMP</name>
</gene>
<proteinExistence type="evidence at protein level"/>